<protein>
    <recommendedName>
        <fullName evidence="1">Isopentenyl-diphosphate Delta-isomerase</fullName>
        <shortName evidence="1">IPP isomerase</shortName>
        <ecNumber evidence="1">5.3.3.2</ecNumber>
    </recommendedName>
    <alternativeName>
        <fullName evidence="1">IPP:DMAPP isomerase</fullName>
    </alternativeName>
    <alternativeName>
        <fullName evidence="1">Isopentenyl pyrophosphate isomerase</fullName>
    </alternativeName>
</protein>
<comment type="function">
    <text evidence="1">Catalyzes the 1,3-allylic rearrangement of the homoallylic substrate isopentenyl (IPP) to its highly electrophilic allylic isomer, dimethylallyl diphosphate (DMAPP).</text>
</comment>
<comment type="catalytic activity">
    <reaction evidence="1">
        <text>isopentenyl diphosphate = dimethylallyl diphosphate</text>
        <dbReference type="Rhea" id="RHEA:23284"/>
        <dbReference type="ChEBI" id="CHEBI:57623"/>
        <dbReference type="ChEBI" id="CHEBI:128769"/>
        <dbReference type="EC" id="5.3.3.2"/>
    </reaction>
</comment>
<comment type="cofactor">
    <cofactor evidence="1">
        <name>Mg(2+)</name>
        <dbReference type="ChEBI" id="CHEBI:18420"/>
    </cofactor>
    <text evidence="1">Binds 1 Mg(2+) ion per subunit. The magnesium ion binds only when substrate is bound.</text>
</comment>
<comment type="cofactor">
    <cofactor evidence="1">
        <name>Mn(2+)</name>
        <dbReference type="ChEBI" id="CHEBI:29035"/>
    </cofactor>
    <text evidence="1">Binds 1 Mn(2+) ion per subunit.</text>
</comment>
<comment type="pathway">
    <text evidence="1">Isoprenoid biosynthesis; dimethylallyl diphosphate biosynthesis; dimethylallyl diphosphate from isopentenyl diphosphate: step 1/1.</text>
</comment>
<comment type="subcellular location">
    <subcellularLocation>
        <location evidence="1">Cytoplasm</location>
    </subcellularLocation>
</comment>
<comment type="similarity">
    <text evidence="1">Belongs to the IPP isomerase type 1 family.</text>
</comment>
<accession>C1AP18</accession>
<keyword id="KW-0963">Cytoplasm</keyword>
<keyword id="KW-0413">Isomerase</keyword>
<keyword id="KW-0414">Isoprene biosynthesis</keyword>
<keyword id="KW-0460">Magnesium</keyword>
<keyword id="KW-0464">Manganese</keyword>
<keyword id="KW-0479">Metal-binding</keyword>
<gene>
    <name evidence="1" type="primary">idi</name>
    <name type="ordered locus">JTY_1759</name>
</gene>
<evidence type="ECO:0000255" key="1">
    <source>
        <dbReference type="HAMAP-Rule" id="MF_00202"/>
    </source>
</evidence>
<proteinExistence type="inferred from homology"/>
<reference key="1">
    <citation type="journal article" date="2009" name="Vaccine">
        <title>Whole genome sequence analysis of Mycobacterium bovis bacillus Calmette-Guerin (BCG) Tokyo 172: a comparative study of BCG vaccine substrains.</title>
        <authorList>
            <person name="Seki M."/>
            <person name="Honda I."/>
            <person name="Fujita I."/>
            <person name="Yano I."/>
            <person name="Yamamoto S."/>
            <person name="Koyama A."/>
        </authorList>
    </citation>
    <scope>NUCLEOTIDE SEQUENCE [LARGE SCALE GENOMIC DNA]</scope>
    <source>
        <strain>BCG / Tokyo 172 / ATCC 35737 / TMC 1019</strain>
    </source>
</reference>
<name>IDI_MYCBT</name>
<feature type="chain" id="PRO_1000124557" description="Isopentenyl-diphosphate Delta-isomerase">
    <location>
        <begin position="1"/>
        <end position="176"/>
    </location>
</feature>
<feature type="domain" description="Nudix hydrolase">
    <location>
        <begin position="38"/>
        <end position="172"/>
    </location>
</feature>
<feature type="active site" evidence="1">
    <location>
        <position position="75"/>
    </location>
</feature>
<feature type="active site" evidence="1">
    <location>
        <position position="124"/>
    </location>
</feature>
<feature type="binding site" evidence="1">
    <location>
        <position position="33"/>
    </location>
    <ligand>
        <name>Mn(2+)</name>
        <dbReference type="ChEBI" id="CHEBI:29035"/>
    </ligand>
</feature>
<feature type="binding site" evidence="1">
    <location>
        <position position="40"/>
    </location>
    <ligand>
        <name>Mn(2+)</name>
        <dbReference type="ChEBI" id="CHEBI:29035"/>
    </ligand>
</feature>
<feature type="binding site" evidence="1">
    <location>
        <position position="77"/>
    </location>
    <ligand>
        <name>Mn(2+)</name>
        <dbReference type="ChEBI" id="CHEBI:29035"/>
    </ligand>
</feature>
<feature type="binding site" evidence="1">
    <location>
        <position position="95"/>
    </location>
    <ligand>
        <name>Mg(2+)</name>
        <dbReference type="ChEBI" id="CHEBI:18420"/>
    </ligand>
</feature>
<feature type="binding site" evidence="1">
    <location>
        <position position="122"/>
    </location>
    <ligand>
        <name>Mn(2+)</name>
        <dbReference type="ChEBI" id="CHEBI:29035"/>
    </ligand>
</feature>
<feature type="binding site" evidence="1">
    <location>
        <position position="124"/>
    </location>
    <ligand>
        <name>Mn(2+)</name>
        <dbReference type="ChEBI" id="CHEBI:29035"/>
    </ligand>
</feature>
<dbReference type="EC" id="5.3.3.2" evidence="1"/>
<dbReference type="EMBL" id="AP010918">
    <property type="protein sequence ID" value="BAH26047.1"/>
    <property type="molecule type" value="Genomic_DNA"/>
</dbReference>
<dbReference type="SMR" id="C1AP18"/>
<dbReference type="KEGG" id="mbt:JTY_1759"/>
<dbReference type="HOGENOM" id="CLU_060552_2_0_11"/>
<dbReference type="UniPathway" id="UPA00059">
    <property type="reaction ID" value="UER00104"/>
</dbReference>
<dbReference type="GO" id="GO:0005737">
    <property type="term" value="C:cytoplasm"/>
    <property type="evidence" value="ECO:0007669"/>
    <property type="project" value="UniProtKB-SubCell"/>
</dbReference>
<dbReference type="GO" id="GO:0004452">
    <property type="term" value="F:isopentenyl-diphosphate delta-isomerase activity"/>
    <property type="evidence" value="ECO:0007669"/>
    <property type="project" value="UniProtKB-UniRule"/>
</dbReference>
<dbReference type="GO" id="GO:0046872">
    <property type="term" value="F:metal ion binding"/>
    <property type="evidence" value="ECO:0007669"/>
    <property type="project" value="UniProtKB-KW"/>
</dbReference>
<dbReference type="GO" id="GO:0050992">
    <property type="term" value="P:dimethylallyl diphosphate biosynthetic process"/>
    <property type="evidence" value="ECO:0007669"/>
    <property type="project" value="UniProtKB-UniRule"/>
</dbReference>
<dbReference type="GO" id="GO:0008299">
    <property type="term" value="P:isoprenoid biosynthetic process"/>
    <property type="evidence" value="ECO:0007669"/>
    <property type="project" value="UniProtKB-KW"/>
</dbReference>
<dbReference type="CDD" id="cd02885">
    <property type="entry name" value="NUDIX_IPP_Isomerase"/>
    <property type="match status" value="1"/>
</dbReference>
<dbReference type="FunFam" id="3.90.79.10:FF:000009">
    <property type="entry name" value="Isopentenyl-diphosphate Delta-isomerase"/>
    <property type="match status" value="1"/>
</dbReference>
<dbReference type="Gene3D" id="3.90.79.10">
    <property type="entry name" value="Nucleoside Triphosphate Pyrophosphohydrolase"/>
    <property type="match status" value="1"/>
</dbReference>
<dbReference type="HAMAP" id="MF_00202">
    <property type="entry name" value="Idi"/>
    <property type="match status" value="1"/>
</dbReference>
<dbReference type="InterPro" id="IPR056375">
    <property type="entry name" value="Idi_bact"/>
</dbReference>
<dbReference type="InterPro" id="IPR011876">
    <property type="entry name" value="IsopentenylPP_isomerase_typ1"/>
</dbReference>
<dbReference type="InterPro" id="IPR015797">
    <property type="entry name" value="NUDIX_hydrolase-like_dom_sf"/>
</dbReference>
<dbReference type="InterPro" id="IPR000086">
    <property type="entry name" value="NUDIX_hydrolase_dom"/>
</dbReference>
<dbReference type="NCBIfam" id="TIGR02150">
    <property type="entry name" value="IPP_isom_1"/>
    <property type="match status" value="1"/>
</dbReference>
<dbReference type="NCBIfam" id="NF002995">
    <property type="entry name" value="PRK03759.1"/>
    <property type="match status" value="1"/>
</dbReference>
<dbReference type="PANTHER" id="PTHR10885">
    <property type="entry name" value="ISOPENTENYL-DIPHOSPHATE DELTA-ISOMERASE"/>
    <property type="match status" value="1"/>
</dbReference>
<dbReference type="PANTHER" id="PTHR10885:SF0">
    <property type="entry name" value="ISOPENTENYL-DIPHOSPHATE DELTA-ISOMERASE"/>
    <property type="match status" value="1"/>
</dbReference>
<dbReference type="Pfam" id="PF00293">
    <property type="entry name" value="NUDIX"/>
    <property type="match status" value="1"/>
</dbReference>
<dbReference type="PIRSF" id="PIRSF018427">
    <property type="entry name" value="Isopntndiph_ism"/>
    <property type="match status" value="1"/>
</dbReference>
<dbReference type="SUPFAM" id="SSF55811">
    <property type="entry name" value="Nudix"/>
    <property type="match status" value="1"/>
</dbReference>
<dbReference type="PROSITE" id="PS51462">
    <property type="entry name" value="NUDIX"/>
    <property type="match status" value="1"/>
</dbReference>
<sequence length="176" mass="19585">MTRSYRPAPPIERVVLLNDRGDATGVADKATVHTGDTPLHLAFSSYVFDLHDQLLITRRAATKRTWPAVWTNSCCGHPLPGESLPGAIRRRLAAELGLTPDRVDLILPGFRYRAAMADGTVENEICPVYRVQVDQQPRPNSDEVDAIRWLSWEQFVRDVTAGVIAPVSPWCRSQLG</sequence>
<organism>
    <name type="scientific">Mycobacterium bovis (strain BCG / Tokyo 172 / ATCC 35737 / TMC 1019)</name>
    <dbReference type="NCBI Taxonomy" id="561275"/>
    <lineage>
        <taxon>Bacteria</taxon>
        <taxon>Bacillati</taxon>
        <taxon>Actinomycetota</taxon>
        <taxon>Actinomycetes</taxon>
        <taxon>Mycobacteriales</taxon>
        <taxon>Mycobacteriaceae</taxon>
        <taxon>Mycobacterium</taxon>
        <taxon>Mycobacterium tuberculosis complex</taxon>
    </lineage>
</organism>